<organism>
    <name type="scientific">Clostridium novyi (strain NT)</name>
    <dbReference type="NCBI Taxonomy" id="386415"/>
    <lineage>
        <taxon>Bacteria</taxon>
        <taxon>Bacillati</taxon>
        <taxon>Bacillota</taxon>
        <taxon>Clostridia</taxon>
        <taxon>Eubacteriales</taxon>
        <taxon>Clostridiaceae</taxon>
        <taxon>Clostridium</taxon>
    </lineage>
</organism>
<gene>
    <name evidence="1" type="primary">rpsO</name>
    <name type="ordered locus">NT01CX_2131</name>
</gene>
<reference key="1">
    <citation type="journal article" date="2006" name="Nat. Biotechnol.">
        <title>The genome and transcriptomes of the anti-tumor agent Clostridium novyi-NT.</title>
        <authorList>
            <person name="Bettegowda C."/>
            <person name="Huang X."/>
            <person name="Lin J."/>
            <person name="Cheong I."/>
            <person name="Kohli M."/>
            <person name="Szabo S.A."/>
            <person name="Zhang X."/>
            <person name="Diaz L.A. Jr."/>
            <person name="Velculescu V.E."/>
            <person name="Parmigiani G."/>
            <person name="Kinzler K.W."/>
            <person name="Vogelstein B."/>
            <person name="Zhou S."/>
        </authorList>
    </citation>
    <scope>NUCLEOTIDE SEQUENCE [LARGE SCALE GENOMIC DNA]</scope>
    <source>
        <strain>NT</strain>
    </source>
</reference>
<evidence type="ECO:0000255" key="1">
    <source>
        <dbReference type="HAMAP-Rule" id="MF_01343"/>
    </source>
</evidence>
<evidence type="ECO:0000256" key="2">
    <source>
        <dbReference type="SAM" id="MobiDB-lite"/>
    </source>
</evidence>
<evidence type="ECO:0000305" key="3"/>
<dbReference type="EMBL" id="CP000382">
    <property type="protein sequence ID" value="ABK61378.1"/>
    <property type="molecule type" value="Genomic_DNA"/>
</dbReference>
<dbReference type="RefSeq" id="WP_011722204.1">
    <property type="nucleotide sequence ID" value="NC_008593.1"/>
</dbReference>
<dbReference type="SMR" id="A0Q0Q2"/>
<dbReference type="STRING" id="386415.NT01CX_2131"/>
<dbReference type="KEGG" id="cno:NT01CX_2131"/>
<dbReference type="eggNOG" id="COG0184">
    <property type="taxonomic scope" value="Bacteria"/>
</dbReference>
<dbReference type="HOGENOM" id="CLU_148518_0_0_9"/>
<dbReference type="Proteomes" id="UP000008220">
    <property type="component" value="Chromosome"/>
</dbReference>
<dbReference type="GO" id="GO:0022627">
    <property type="term" value="C:cytosolic small ribosomal subunit"/>
    <property type="evidence" value="ECO:0007669"/>
    <property type="project" value="TreeGrafter"/>
</dbReference>
<dbReference type="GO" id="GO:0019843">
    <property type="term" value="F:rRNA binding"/>
    <property type="evidence" value="ECO:0007669"/>
    <property type="project" value="UniProtKB-UniRule"/>
</dbReference>
<dbReference type="GO" id="GO:0003735">
    <property type="term" value="F:structural constituent of ribosome"/>
    <property type="evidence" value="ECO:0007669"/>
    <property type="project" value="InterPro"/>
</dbReference>
<dbReference type="GO" id="GO:0006412">
    <property type="term" value="P:translation"/>
    <property type="evidence" value="ECO:0007669"/>
    <property type="project" value="UniProtKB-UniRule"/>
</dbReference>
<dbReference type="CDD" id="cd00353">
    <property type="entry name" value="Ribosomal_S15p_S13e"/>
    <property type="match status" value="1"/>
</dbReference>
<dbReference type="FunFam" id="1.10.287.10:FF:000002">
    <property type="entry name" value="30S ribosomal protein S15"/>
    <property type="match status" value="1"/>
</dbReference>
<dbReference type="Gene3D" id="6.10.250.3130">
    <property type="match status" value="1"/>
</dbReference>
<dbReference type="Gene3D" id="1.10.287.10">
    <property type="entry name" value="S15/NS1, RNA-binding"/>
    <property type="match status" value="1"/>
</dbReference>
<dbReference type="HAMAP" id="MF_01343_B">
    <property type="entry name" value="Ribosomal_uS15_B"/>
    <property type="match status" value="1"/>
</dbReference>
<dbReference type="InterPro" id="IPR000589">
    <property type="entry name" value="Ribosomal_uS15"/>
</dbReference>
<dbReference type="InterPro" id="IPR005290">
    <property type="entry name" value="Ribosomal_uS15_bac-type"/>
</dbReference>
<dbReference type="InterPro" id="IPR009068">
    <property type="entry name" value="uS15_NS1_RNA-bd_sf"/>
</dbReference>
<dbReference type="NCBIfam" id="TIGR00952">
    <property type="entry name" value="S15_bact"/>
    <property type="match status" value="1"/>
</dbReference>
<dbReference type="PANTHER" id="PTHR23321">
    <property type="entry name" value="RIBOSOMAL PROTEIN S15, BACTERIAL AND ORGANELLAR"/>
    <property type="match status" value="1"/>
</dbReference>
<dbReference type="PANTHER" id="PTHR23321:SF26">
    <property type="entry name" value="SMALL RIBOSOMAL SUBUNIT PROTEIN US15M"/>
    <property type="match status" value="1"/>
</dbReference>
<dbReference type="Pfam" id="PF00312">
    <property type="entry name" value="Ribosomal_S15"/>
    <property type="match status" value="1"/>
</dbReference>
<dbReference type="SMART" id="SM01387">
    <property type="entry name" value="Ribosomal_S15"/>
    <property type="match status" value="1"/>
</dbReference>
<dbReference type="SUPFAM" id="SSF47060">
    <property type="entry name" value="S15/NS1 RNA-binding domain"/>
    <property type="match status" value="1"/>
</dbReference>
<dbReference type="PROSITE" id="PS00362">
    <property type="entry name" value="RIBOSOMAL_S15"/>
    <property type="match status" value="1"/>
</dbReference>
<keyword id="KW-1185">Reference proteome</keyword>
<keyword id="KW-0687">Ribonucleoprotein</keyword>
<keyword id="KW-0689">Ribosomal protein</keyword>
<keyword id="KW-0694">RNA-binding</keyword>
<keyword id="KW-0699">rRNA-binding</keyword>
<feature type="chain" id="PRO_0000354191" description="Small ribosomal subunit protein uS15">
    <location>
        <begin position="1"/>
        <end position="87"/>
    </location>
</feature>
<feature type="region of interest" description="Disordered" evidence="2">
    <location>
        <begin position="1"/>
        <end position="22"/>
    </location>
</feature>
<feature type="compositionally biased region" description="Basic and acidic residues" evidence="2">
    <location>
        <begin position="1"/>
        <end position="19"/>
    </location>
</feature>
<sequence>MEKARKEQLIREYATHEGDTGSPEVQVALLTERINHLNEHLKEHKKDHHSRRGLLMMVGKRRGLLNYLKEHDIERYRSLIKRLGLRK</sequence>
<accession>A0Q0Q2</accession>
<comment type="function">
    <text evidence="1">One of the primary rRNA binding proteins, it binds directly to 16S rRNA where it helps nucleate assembly of the platform of the 30S subunit by binding and bridging several RNA helices of the 16S rRNA.</text>
</comment>
<comment type="function">
    <text evidence="1">Forms an intersubunit bridge (bridge B4) with the 23S rRNA of the 50S subunit in the ribosome.</text>
</comment>
<comment type="subunit">
    <text evidence="1">Part of the 30S ribosomal subunit. Forms a bridge to the 50S subunit in the 70S ribosome, contacting the 23S rRNA.</text>
</comment>
<comment type="similarity">
    <text evidence="1">Belongs to the universal ribosomal protein uS15 family.</text>
</comment>
<protein>
    <recommendedName>
        <fullName evidence="1">Small ribosomal subunit protein uS15</fullName>
    </recommendedName>
    <alternativeName>
        <fullName evidence="3">30S ribosomal protein S15</fullName>
    </alternativeName>
</protein>
<name>RS15_CLONN</name>
<proteinExistence type="inferred from homology"/>